<evidence type="ECO:0000255" key="1">
    <source>
        <dbReference type="HAMAP-Rule" id="MF_00808"/>
    </source>
</evidence>
<name>PSBT_TECAU</name>
<geneLocation type="chloroplast"/>
<protein>
    <recommendedName>
        <fullName evidence="1">Photosystem II reaction center protein T</fullName>
        <shortName evidence="1">PSII-T</shortName>
    </recommendedName>
</protein>
<dbReference type="EMBL" id="AY181939">
    <property type="protein sequence ID" value="AAO66175.1"/>
    <property type="molecule type" value="Genomic_DNA"/>
</dbReference>
<dbReference type="SMR" id="Q7YNH0"/>
<dbReference type="GO" id="GO:0009535">
    <property type="term" value="C:chloroplast thylakoid membrane"/>
    <property type="evidence" value="ECO:0007669"/>
    <property type="project" value="UniProtKB-SubCell"/>
</dbReference>
<dbReference type="GO" id="GO:0009539">
    <property type="term" value="C:photosystem II reaction center"/>
    <property type="evidence" value="ECO:0007669"/>
    <property type="project" value="InterPro"/>
</dbReference>
<dbReference type="GO" id="GO:0015979">
    <property type="term" value="P:photosynthesis"/>
    <property type="evidence" value="ECO:0007669"/>
    <property type="project" value="UniProtKB-UniRule"/>
</dbReference>
<dbReference type="HAMAP" id="MF_00808">
    <property type="entry name" value="PSII_PsbT"/>
    <property type="match status" value="1"/>
</dbReference>
<dbReference type="InterPro" id="IPR001743">
    <property type="entry name" value="PSII_PsbT"/>
</dbReference>
<dbReference type="InterPro" id="IPR037268">
    <property type="entry name" value="PSII_PsbT_sf"/>
</dbReference>
<dbReference type="PANTHER" id="PTHR36411">
    <property type="match status" value="1"/>
</dbReference>
<dbReference type="PANTHER" id="PTHR36411:SF2">
    <property type="entry name" value="PHOTOSYSTEM II REACTION CENTER PROTEIN T"/>
    <property type="match status" value="1"/>
</dbReference>
<dbReference type="Pfam" id="PF01405">
    <property type="entry name" value="PsbT"/>
    <property type="match status" value="1"/>
</dbReference>
<dbReference type="SUPFAM" id="SSF161029">
    <property type="entry name" value="Photosystem II reaction center protein T, PsbT"/>
    <property type="match status" value="1"/>
</dbReference>
<keyword id="KW-0150">Chloroplast</keyword>
<keyword id="KW-0472">Membrane</keyword>
<keyword id="KW-0602">Photosynthesis</keyword>
<keyword id="KW-0604">Photosystem II</keyword>
<keyword id="KW-0934">Plastid</keyword>
<keyword id="KW-0793">Thylakoid</keyword>
<keyword id="KW-0812">Transmembrane</keyword>
<keyword id="KW-1133">Transmembrane helix</keyword>
<reference key="1">
    <citation type="journal article" date="2003" name="Plant Syst. Evol.">
        <title>An integrated molecular and morphological study of the subfamily Suaedoideae Ulbr. (Chenopodiaceae).</title>
        <authorList>
            <person name="Schuetze P."/>
            <person name="Freitag H."/>
            <person name="Weising K."/>
        </authorList>
    </citation>
    <scope>NUCLEOTIDE SEQUENCE [GENOMIC DNA]</scope>
</reference>
<feature type="chain" id="PRO_0000217990" description="Photosystem II reaction center protein T">
    <location>
        <begin position="1"/>
        <end position="35"/>
    </location>
</feature>
<feature type="transmembrane region" description="Helical" evidence="1">
    <location>
        <begin position="3"/>
        <end position="23"/>
    </location>
</feature>
<sequence length="35" mass="4122">MEALVYTFLLVSTLGIIFFAIFFREPPKIQTKKMK</sequence>
<proteinExistence type="inferred from homology"/>
<comment type="function">
    <text evidence="1">Found at the monomer-monomer interface of the photosystem II (PS II) dimer, plays a role in assembly and dimerization of PSII. PSII is a light-driven water plastoquinone oxidoreductase, using light energy to abstract electrons from H(2)O, generating a proton gradient subsequently used for ATP formation.</text>
</comment>
<comment type="subunit">
    <text evidence="1">PSII is composed of 1 copy each of membrane proteins PsbA, PsbB, PsbC, PsbD, PsbE, PsbF, PsbH, PsbI, PsbJ, PsbK, PsbL, PsbM, PsbT, PsbY, PsbZ, Psb30/Ycf12, at least 3 peripheral proteins of the oxygen-evolving complex and a large number of cofactors. It forms dimeric complexes.</text>
</comment>
<comment type="subcellular location">
    <subcellularLocation>
        <location evidence="1">Plastid</location>
        <location evidence="1">Chloroplast thylakoid membrane</location>
        <topology evidence="1">Single-pass membrane protein</topology>
    </subcellularLocation>
</comment>
<comment type="similarity">
    <text evidence="1">Belongs to the PsbT family.</text>
</comment>
<accession>Q7YNH0</accession>
<gene>
    <name evidence="1" type="primary">psbT</name>
</gene>
<organism>
    <name type="scientific">Tecticornia australasica</name>
    <name type="common">Australasian samphire</name>
    <dbReference type="NCBI Taxonomy" id="224193"/>
    <lineage>
        <taxon>Eukaryota</taxon>
        <taxon>Viridiplantae</taxon>
        <taxon>Streptophyta</taxon>
        <taxon>Embryophyta</taxon>
        <taxon>Tracheophyta</taxon>
        <taxon>Spermatophyta</taxon>
        <taxon>Magnoliopsida</taxon>
        <taxon>eudicotyledons</taxon>
        <taxon>Gunneridae</taxon>
        <taxon>Pentapetalae</taxon>
        <taxon>Caryophyllales</taxon>
        <taxon>Chenopodiaceae</taxon>
        <taxon>Salicornioideae</taxon>
        <taxon>Tecticornia</taxon>
    </lineage>
</organism>